<reference key="1">
    <citation type="journal article" date="1995" name="J. Bacteriol.">
        <title>New beta-glucoside (bgl) genes in Bacillus subtilis: the bglP gene product has both transport and regulatory functions similar to those of BglF, its Escherichia coli homolog.</title>
        <authorList>
            <person name="Le Coq D."/>
            <person name="Lindner C."/>
            <person name="Krueger S."/>
            <person name="Steinmetz M."/>
            <person name="Stuelke J."/>
        </authorList>
    </citation>
    <scope>NUCLEOTIDE SEQUENCE [GENOMIC DNA]</scope>
    <source>
        <strain>168 / Marburg / ATCC 6051 / DSM 10 / JCM 1465 / NBRC 13719 / NCIMB 3610 / NRRL NRS-744 / VKM B-501</strain>
    </source>
</reference>
<reference key="2">
    <citation type="journal article" date="1995" name="Microbiology">
        <title>Cloning and sequencing of a 29 kb region of the Bacillus subtilis genome containing the hut and wapA loci.</title>
        <authorList>
            <person name="Yoshida K."/>
            <person name="Sano H."/>
            <person name="Seki S."/>
            <person name="Oda M."/>
            <person name="Fujimura M."/>
            <person name="Fujita Y."/>
        </authorList>
    </citation>
    <scope>NUCLEOTIDE SEQUENCE [GENOMIC DNA]</scope>
    <source>
        <strain>168 / BGSC1A1</strain>
    </source>
</reference>
<reference key="3">
    <citation type="journal article" date="1997" name="Nature">
        <title>The complete genome sequence of the Gram-positive bacterium Bacillus subtilis.</title>
        <authorList>
            <person name="Kunst F."/>
            <person name="Ogasawara N."/>
            <person name="Moszer I."/>
            <person name="Albertini A.M."/>
            <person name="Alloni G."/>
            <person name="Azevedo V."/>
            <person name="Bertero M.G."/>
            <person name="Bessieres P."/>
            <person name="Bolotin A."/>
            <person name="Borchert S."/>
            <person name="Borriss R."/>
            <person name="Boursier L."/>
            <person name="Brans A."/>
            <person name="Braun M."/>
            <person name="Brignell S.C."/>
            <person name="Bron S."/>
            <person name="Brouillet S."/>
            <person name="Bruschi C.V."/>
            <person name="Caldwell B."/>
            <person name="Capuano V."/>
            <person name="Carter N.M."/>
            <person name="Choi S.-K."/>
            <person name="Codani J.-J."/>
            <person name="Connerton I.F."/>
            <person name="Cummings N.J."/>
            <person name="Daniel R.A."/>
            <person name="Denizot F."/>
            <person name="Devine K.M."/>
            <person name="Duesterhoeft A."/>
            <person name="Ehrlich S.D."/>
            <person name="Emmerson P.T."/>
            <person name="Entian K.-D."/>
            <person name="Errington J."/>
            <person name="Fabret C."/>
            <person name="Ferrari E."/>
            <person name="Foulger D."/>
            <person name="Fritz C."/>
            <person name="Fujita M."/>
            <person name="Fujita Y."/>
            <person name="Fuma S."/>
            <person name="Galizzi A."/>
            <person name="Galleron N."/>
            <person name="Ghim S.-Y."/>
            <person name="Glaser P."/>
            <person name="Goffeau A."/>
            <person name="Golightly E.J."/>
            <person name="Grandi G."/>
            <person name="Guiseppi G."/>
            <person name="Guy B.J."/>
            <person name="Haga K."/>
            <person name="Haiech J."/>
            <person name="Harwood C.R."/>
            <person name="Henaut A."/>
            <person name="Hilbert H."/>
            <person name="Holsappel S."/>
            <person name="Hosono S."/>
            <person name="Hullo M.-F."/>
            <person name="Itaya M."/>
            <person name="Jones L.-M."/>
            <person name="Joris B."/>
            <person name="Karamata D."/>
            <person name="Kasahara Y."/>
            <person name="Klaerr-Blanchard M."/>
            <person name="Klein C."/>
            <person name="Kobayashi Y."/>
            <person name="Koetter P."/>
            <person name="Koningstein G."/>
            <person name="Krogh S."/>
            <person name="Kumano M."/>
            <person name="Kurita K."/>
            <person name="Lapidus A."/>
            <person name="Lardinois S."/>
            <person name="Lauber J."/>
            <person name="Lazarevic V."/>
            <person name="Lee S.-M."/>
            <person name="Levine A."/>
            <person name="Liu H."/>
            <person name="Masuda S."/>
            <person name="Mauel C."/>
            <person name="Medigue C."/>
            <person name="Medina N."/>
            <person name="Mellado R.P."/>
            <person name="Mizuno M."/>
            <person name="Moestl D."/>
            <person name="Nakai S."/>
            <person name="Noback M."/>
            <person name="Noone D."/>
            <person name="O'Reilly M."/>
            <person name="Ogawa K."/>
            <person name="Ogiwara A."/>
            <person name="Oudega B."/>
            <person name="Park S.-H."/>
            <person name="Parro V."/>
            <person name="Pohl T.M."/>
            <person name="Portetelle D."/>
            <person name="Porwollik S."/>
            <person name="Prescott A.M."/>
            <person name="Presecan E."/>
            <person name="Pujic P."/>
            <person name="Purnelle B."/>
            <person name="Rapoport G."/>
            <person name="Rey M."/>
            <person name="Reynolds S."/>
            <person name="Rieger M."/>
            <person name="Rivolta C."/>
            <person name="Rocha E."/>
            <person name="Roche B."/>
            <person name="Rose M."/>
            <person name="Sadaie Y."/>
            <person name="Sato T."/>
            <person name="Scanlan E."/>
            <person name="Schleich S."/>
            <person name="Schroeter R."/>
            <person name="Scoffone F."/>
            <person name="Sekiguchi J."/>
            <person name="Sekowska A."/>
            <person name="Seror S.J."/>
            <person name="Serror P."/>
            <person name="Shin B.-S."/>
            <person name="Soldo B."/>
            <person name="Sorokin A."/>
            <person name="Tacconi E."/>
            <person name="Takagi T."/>
            <person name="Takahashi H."/>
            <person name="Takemaru K."/>
            <person name="Takeuchi M."/>
            <person name="Tamakoshi A."/>
            <person name="Tanaka T."/>
            <person name="Terpstra P."/>
            <person name="Tognoni A."/>
            <person name="Tosato V."/>
            <person name="Uchiyama S."/>
            <person name="Vandenbol M."/>
            <person name="Vannier F."/>
            <person name="Vassarotti A."/>
            <person name="Viari A."/>
            <person name="Wambutt R."/>
            <person name="Wedler E."/>
            <person name="Wedler H."/>
            <person name="Weitzenegger T."/>
            <person name="Winters P."/>
            <person name="Wipat A."/>
            <person name="Yamamoto H."/>
            <person name="Yamane K."/>
            <person name="Yasumoto K."/>
            <person name="Yata K."/>
            <person name="Yoshida K."/>
            <person name="Yoshikawa H.-F."/>
            <person name="Zumstein E."/>
            <person name="Yoshikawa H."/>
            <person name="Danchin A."/>
        </authorList>
    </citation>
    <scope>NUCLEOTIDE SEQUENCE [LARGE SCALE GENOMIC DNA]</scope>
    <source>
        <strain>168</strain>
    </source>
</reference>
<reference key="4">
    <citation type="journal article" date="2004" name="Arch. Microbiol.">
        <title>Identification of aryl-phospho-beta-D-glucosidases in Bacillus subtilis.</title>
        <authorList>
            <person name="Setlow B."/>
            <person name="Cabrera-Hernandez A."/>
            <person name="Cabrera-Martinez R.M."/>
            <person name="Setlow P."/>
        </authorList>
    </citation>
    <scope>FUNCTION AS AN ARYL-PHOSPHO-BETA-D-GLUCOSIDASE</scope>
    <scope>DEVELOPMENTAL STAGE</scope>
    <scope>INDUCTION</scope>
    <source>
        <strain>168 / PS832</strain>
    </source>
</reference>
<name>BGLH_BACSU</name>
<evidence type="ECO:0000255" key="1"/>
<evidence type="ECO:0000255" key="2">
    <source>
        <dbReference type="PROSITE-ProRule" id="PRU10055"/>
    </source>
</evidence>
<evidence type="ECO:0000269" key="3">
    <source>
    </source>
</evidence>
<evidence type="ECO:0000305" key="4"/>
<accession>P40740</accession>
<accession>O32287</accession>
<feature type="chain" id="PRO_0000063873" description="Aryl-phospho-beta-D-glucosidase BglH">
    <location>
        <begin position="1"/>
        <end position="469"/>
    </location>
</feature>
<feature type="active site" description="Proton donor" evidence="1">
    <location>
        <position position="175"/>
    </location>
</feature>
<feature type="active site" description="Nucleophile" evidence="2">
    <location>
        <position position="368"/>
    </location>
</feature>
<feature type="sequence conflict" description="In Ref. 1; CAA84287." evidence="4" ref="1">
    <original>A</original>
    <variation>R</variation>
    <location>
        <position position="402"/>
    </location>
</feature>
<gene>
    <name type="primary">bglH</name>
    <name type="ordered locus">BSU39260</name>
    <name type="ORF">N17D</name>
</gene>
<keyword id="KW-0119">Carbohydrate metabolism</keyword>
<keyword id="KW-0326">Glycosidase</keyword>
<keyword id="KW-0378">Hydrolase</keyword>
<keyword id="KW-1185">Reference proteome</keyword>
<dbReference type="EC" id="3.2.1.86"/>
<dbReference type="EMBL" id="Z34526">
    <property type="protein sequence ID" value="CAA84287.1"/>
    <property type="molecule type" value="Genomic_DNA"/>
</dbReference>
<dbReference type="EMBL" id="D31856">
    <property type="protein sequence ID" value="BAA06653.1"/>
    <property type="molecule type" value="Genomic_DNA"/>
</dbReference>
<dbReference type="EMBL" id="D29985">
    <property type="protein sequence ID" value="BAA06257.1"/>
    <property type="molecule type" value="Genomic_DNA"/>
</dbReference>
<dbReference type="EMBL" id="AL009126">
    <property type="protein sequence ID" value="CAB15962.2"/>
    <property type="molecule type" value="Genomic_DNA"/>
</dbReference>
<dbReference type="PIR" id="H69593">
    <property type="entry name" value="H69593"/>
</dbReference>
<dbReference type="RefSeq" id="NP_391805.2">
    <property type="nucleotide sequence ID" value="NC_000964.3"/>
</dbReference>
<dbReference type="RefSeq" id="WP_003243232.1">
    <property type="nucleotide sequence ID" value="NZ_OZ025638.1"/>
</dbReference>
<dbReference type="SMR" id="P40740"/>
<dbReference type="FunCoup" id="P40740">
    <property type="interactions" value="262"/>
</dbReference>
<dbReference type="STRING" id="224308.BSU39260"/>
<dbReference type="CAZy" id="GH1">
    <property type="family name" value="Glycoside Hydrolase Family 1"/>
</dbReference>
<dbReference type="jPOST" id="P40740"/>
<dbReference type="PaxDb" id="224308-BSU39260"/>
<dbReference type="EnsemblBacteria" id="CAB15962">
    <property type="protein sequence ID" value="CAB15962"/>
    <property type="gene ID" value="BSU_39260"/>
</dbReference>
<dbReference type="GeneID" id="937512"/>
<dbReference type="KEGG" id="bsu:BSU39260"/>
<dbReference type="PATRIC" id="fig|224308.179.peg.4250"/>
<dbReference type="eggNOG" id="COG2723">
    <property type="taxonomic scope" value="Bacteria"/>
</dbReference>
<dbReference type="InParanoid" id="P40740"/>
<dbReference type="OrthoDB" id="9765195at2"/>
<dbReference type="PhylomeDB" id="P40740"/>
<dbReference type="BioCyc" id="BSUB:BSU39260-MONOMER"/>
<dbReference type="Proteomes" id="UP000001570">
    <property type="component" value="Chromosome"/>
</dbReference>
<dbReference type="GO" id="GO:0005829">
    <property type="term" value="C:cytosol"/>
    <property type="evidence" value="ECO:0000318"/>
    <property type="project" value="GO_Central"/>
</dbReference>
<dbReference type="GO" id="GO:0008706">
    <property type="term" value="F:6-phospho-beta-glucosidase activity"/>
    <property type="evidence" value="ECO:0007669"/>
    <property type="project" value="UniProtKB-EC"/>
</dbReference>
<dbReference type="GO" id="GO:0008422">
    <property type="term" value="F:beta-glucosidase activity"/>
    <property type="evidence" value="ECO:0000318"/>
    <property type="project" value="GO_Central"/>
</dbReference>
<dbReference type="GO" id="GO:0016052">
    <property type="term" value="P:carbohydrate catabolic process"/>
    <property type="evidence" value="ECO:0000318"/>
    <property type="project" value="GO_Central"/>
</dbReference>
<dbReference type="FunFam" id="3.20.20.80:FF:000004">
    <property type="entry name" value="Beta-glucosidase 6-phospho-beta-glucosidase"/>
    <property type="match status" value="1"/>
</dbReference>
<dbReference type="Gene3D" id="3.20.20.80">
    <property type="entry name" value="Glycosidases"/>
    <property type="match status" value="1"/>
</dbReference>
<dbReference type="InterPro" id="IPR001360">
    <property type="entry name" value="Glyco_hydro_1"/>
</dbReference>
<dbReference type="InterPro" id="IPR018120">
    <property type="entry name" value="Glyco_hydro_1_AS"/>
</dbReference>
<dbReference type="InterPro" id="IPR033132">
    <property type="entry name" value="Glyco_hydro_1_N_CS"/>
</dbReference>
<dbReference type="InterPro" id="IPR017853">
    <property type="entry name" value="Glycoside_hydrolase_SF"/>
</dbReference>
<dbReference type="NCBIfam" id="NF007154">
    <property type="entry name" value="PRK09589.1"/>
    <property type="match status" value="1"/>
</dbReference>
<dbReference type="NCBIfam" id="NF007158">
    <property type="entry name" value="PRK09593.1"/>
    <property type="match status" value="1"/>
</dbReference>
<dbReference type="NCBIfam" id="NF007356">
    <property type="entry name" value="PRK09852.1"/>
    <property type="match status" value="1"/>
</dbReference>
<dbReference type="PANTHER" id="PTHR10353:SF122">
    <property type="entry name" value="6-PHOSPHO-BETA-GLUCOSIDASE ASCB-RELATED"/>
    <property type="match status" value="1"/>
</dbReference>
<dbReference type="PANTHER" id="PTHR10353">
    <property type="entry name" value="GLYCOSYL HYDROLASE"/>
    <property type="match status" value="1"/>
</dbReference>
<dbReference type="Pfam" id="PF00232">
    <property type="entry name" value="Glyco_hydro_1"/>
    <property type="match status" value="1"/>
</dbReference>
<dbReference type="PRINTS" id="PR00131">
    <property type="entry name" value="GLHYDRLASE1"/>
</dbReference>
<dbReference type="SUPFAM" id="SSF51445">
    <property type="entry name" value="(Trans)glycosidases"/>
    <property type="match status" value="1"/>
</dbReference>
<dbReference type="PROSITE" id="PS00572">
    <property type="entry name" value="GLYCOSYL_HYDROL_F1_1"/>
    <property type="match status" value="1"/>
</dbReference>
<dbReference type="PROSITE" id="PS00653">
    <property type="entry name" value="GLYCOSYL_HYDROL_F1_2"/>
    <property type="match status" value="1"/>
</dbReference>
<organism>
    <name type="scientific">Bacillus subtilis (strain 168)</name>
    <dbReference type="NCBI Taxonomy" id="224308"/>
    <lineage>
        <taxon>Bacteria</taxon>
        <taxon>Bacillati</taxon>
        <taxon>Bacillota</taxon>
        <taxon>Bacilli</taxon>
        <taxon>Bacillales</taxon>
        <taxon>Bacillaceae</taxon>
        <taxon>Bacillus</taxon>
    </lineage>
</organism>
<comment type="function">
    <text evidence="3">Catalyzes the hydrolysis of aryl-phospho-beta-D-glucosides such as 4-methylumbelliferyl-phospho-beta-D-glucopyranoside (MUG-P), phosphoarbutin and phosphosalicin. Plays a major role in the utilization of arbutin or salicin as the sole carbon source. BglA and BglH are the major proteins contributing to hydrolysis of MUG-P by extracts of late-exponential-phase or stationary-phase B.subtilis cells.</text>
</comment>
<comment type="catalytic activity">
    <reaction>
        <text>6-phospho-beta-D-glucosyl-(1-&gt;4)-D-glucose + H2O = D-glucose 6-phosphate + D-glucose</text>
        <dbReference type="Rhea" id="RHEA:10772"/>
        <dbReference type="ChEBI" id="CHEBI:4167"/>
        <dbReference type="ChEBI" id="CHEBI:15377"/>
        <dbReference type="ChEBI" id="CHEBI:58312"/>
        <dbReference type="ChEBI" id="CHEBI:61548"/>
        <dbReference type="EC" id="3.2.1.86"/>
    </reaction>
</comment>
<comment type="developmental stage">
    <text evidence="3">Significantly expressed throughout all stages of growth or development.</text>
</comment>
<comment type="induction">
    <text evidence="3">Highly up-regulated by aryl-beta-D-glucosides such as salicin or 4-methylumbelliferyl-beta-D-glucopyranoside (MUG).</text>
</comment>
<comment type="similarity">
    <text evidence="4">Belongs to the glycosyl hydrolase 1 family.</text>
</comment>
<protein>
    <recommendedName>
        <fullName>Aryl-phospho-beta-D-glucosidase BglH</fullName>
        <ecNumber>3.2.1.86</ecNumber>
    </recommendedName>
    <alternativeName>
        <fullName>6-phospho-beta-glucosidase</fullName>
    </alternativeName>
</protein>
<proteinExistence type="evidence at protein level"/>
<sequence>MSSNEKRFPEGFLWGGAVAANQVEGAYNEGGKGLSTADVSPNGIMSPFDESMTSLNLYHNGIDFYHRYKEDIALFAEMGFKAFRTSIAWTRIFPNGDEEEPNEEGLRFYDDLFDELLKHHIEPVVTISHYEMPLGLVKNYGGWKNRKVIEFYERYAKTVFKRYQHKVKYWMTFNEINVVLHAPFTGGGLVFEEGENKLNAMYQAAHHQFVASALAVKAGHDIIPDSKIGCMIAATTTYPMTSKPEDVFAAMENERKTLFFSDVQARGAYPGYMKRYLAENNIEIEMAEGDEELLKEHTVDYIGFSYYMSMAASTDPEELAKSGGNLLGGVKNPYLKSSEWGWQIDPKGLRITLNTLYDRYQKPLFIVENGLGAVDKVEEDGTIQDDYRINYLRDHLIEAREAIADGVELIGYTSWGPIDLVSASTAEMKKRYGFIYVDRDNEGNGTFNRIKKKSFNWYQQVIATNGESL</sequence>